<reference key="1">
    <citation type="journal article" date="2002" name="Nature">
        <title>Sequence and analysis of chromosome 2 of Dictyostelium discoideum.</title>
        <authorList>
            <person name="Gloeckner G."/>
            <person name="Eichinger L."/>
            <person name="Szafranski K."/>
            <person name="Pachebat J.A."/>
            <person name="Bankier A.T."/>
            <person name="Dear P.H."/>
            <person name="Lehmann R."/>
            <person name="Baumgart C."/>
            <person name="Parra G."/>
            <person name="Abril J.F."/>
            <person name="Guigo R."/>
            <person name="Kumpf K."/>
            <person name="Tunggal B."/>
            <person name="Cox E.C."/>
            <person name="Quail M.A."/>
            <person name="Platzer M."/>
            <person name="Rosenthal A."/>
            <person name="Noegel A.A."/>
        </authorList>
    </citation>
    <scope>NUCLEOTIDE SEQUENCE [LARGE SCALE GENOMIC DNA]</scope>
    <source>
        <strain>AX4</strain>
    </source>
</reference>
<reference key="2">
    <citation type="journal article" date="2005" name="Nature">
        <title>The genome of the social amoeba Dictyostelium discoideum.</title>
        <authorList>
            <person name="Eichinger L."/>
            <person name="Pachebat J.A."/>
            <person name="Gloeckner G."/>
            <person name="Rajandream M.A."/>
            <person name="Sucgang R."/>
            <person name="Berriman M."/>
            <person name="Song J."/>
            <person name="Olsen R."/>
            <person name="Szafranski K."/>
            <person name="Xu Q."/>
            <person name="Tunggal B."/>
            <person name="Kummerfeld S."/>
            <person name="Madera M."/>
            <person name="Konfortov B.A."/>
            <person name="Rivero F."/>
            <person name="Bankier A.T."/>
            <person name="Lehmann R."/>
            <person name="Hamlin N."/>
            <person name="Davies R."/>
            <person name="Gaudet P."/>
            <person name="Fey P."/>
            <person name="Pilcher K."/>
            <person name="Chen G."/>
            <person name="Saunders D."/>
            <person name="Sodergren E.J."/>
            <person name="Davis P."/>
            <person name="Kerhornou A."/>
            <person name="Nie X."/>
            <person name="Hall N."/>
            <person name="Anjard C."/>
            <person name="Hemphill L."/>
            <person name="Bason N."/>
            <person name="Farbrother P."/>
            <person name="Desany B."/>
            <person name="Just E."/>
            <person name="Morio T."/>
            <person name="Rost R."/>
            <person name="Churcher C.M."/>
            <person name="Cooper J."/>
            <person name="Haydock S."/>
            <person name="van Driessche N."/>
            <person name="Cronin A."/>
            <person name="Goodhead I."/>
            <person name="Muzny D.M."/>
            <person name="Mourier T."/>
            <person name="Pain A."/>
            <person name="Lu M."/>
            <person name="Harper D."/>
            <person name="Lindsay R."/>
            <person name="Hauser H."/>
            <person name="James K.D."/>
            <person name="Quiles M."/>
            <person name="Madan Babu M."/>
            <person name="Saito T."/>
            <person name="Buchrieser C."/>
            <person name="Wardroper A."/>
            <person name="Felder M."/>
            <person name="Thangavelu M."/>
            <person name="Johnson D."/>
            <person name="Knights A."/>
            <person name="Loulseged H."/>
            <person name="Mungall K.L."/>
            <person name="Oliver K."/>
            <person name="Price C."/>
            <person name="Quail M.A."/>
            <person name="Urushihara H."/>
            <person name="Hernandez J."/>
            <person name="Rabbinowitsch E."/>
            <person name="Steffen D."/>
            <person name="Sanders M."/>
            <person name="Ma J."/>
            <person name="Kohara Y."/>
            <person name="Sharp S."/>
            <person name="Simmonds M.N."/>
            <person name="Spiegler S."/>
            <person name="Tivey A."/>
            <person name="Sugano S."/>
            <person name="White B."/>
            <person name="Walker D."/>
            <person name="Woodward J.R."/>
            <person name="Winckler T."/>
            <person name="Tanaka Y."/>
            <person name="Shaulsky G."/>
            <person name="Schleicher M."/>
            <person name="Weinstock G.M."/>
            <person name="Rosenthal A."/>
            <person name="Cox E.C."/>
            <person name="Chisholm R.L."/>
            <person name="Gibbs R.A."/>
            <person name="Loomis W.F."/>
            <person name="Platzer M."/>
            <person name="Kay R.R."/>
            <person name="Williams J.G."/>
            <person name="Dear P.H."/>
            <person name="Noegel A.A."/>
            <person name="Barrell B.G."/>
            <person name="Kuspa A."/>
        </authorList>
    </citation>
    <scope>NUCLEOTIDE SEQUENCE [LARGE SCALE GENOMIC DNA]</scope>
    <source>
        <strain>AX4</strain>
    </source>
</reference>
<feature type="chain" id="PRO_0000327835" description="Fructose-bisphosphate aldolase">
    <location>
        <begin position="1"/>
        <end position="357"/>
    </location>
</feature>
<feature type="active site" description="Proton acceptor" evidence="1">
    <location>
        <position position="183"/>
    </location>
</feature>
<feature type="active site" description="Schiff-base intermediate with dihydroxyacetone-P" evidence="1">
    <location>
        <position position="225"/>
    </location>
</feature>
<feature type="binding site" evidence="1">
    <location>
        <position position="49"/>
    </location>
    <ligand>
        <name>substrate</name>
    </ligand>
</feature>
<feature type="binding site" evidence="1">
    <location>
        <position position="140"/>
    </location>
    <ligand>
        <name>substrate</name>
    </ligand>
</feature>
<comment type="catalytic activity">
    <reaction>
        <text>beta-D-fructose 1,6-bisphosphate = D-glyceraldehyde 3-phosphate + dihydroxyacetone phosphate</text>
        <dbReference type="Rhea" id="RHEA:14729"/>
        <dbReference type="ChEBI" id="CHEBI:32966"/>
        <dbReference type="ChEBI" id="CHEBI:57642"/>
        <dbReference type="ChEBI" id="CHEBI:59776"/>
        <dbReference type="EC" id="4.1.2.13"/>
    </reaction>
</comment>
<comment type="pathway">
    <text>Carbohydrate degradation; glycolysis; D-glyceraldehyde 3-phosphate and glycerone phosphate from D-glucose: step 4/4.</text>
</comment>
<comment type="similarity">
    <text evidence="2">Belongs to the class I fructose-bisphosphate aldolase family.</text>
</comment>
<sequence length="357" mass="38903">MNSKFADELIATAKAIVAPGKGILAADESTNTIGARFKKINLENNEENRRAYRELLIGTGNGVNEFIGGIILYEETLYQKMADGRLFTDVLREQKIHIGIKVDKGVVPIPGTDGETSTQGLDGLAERCKKYYEAGARFAKWRAVLKIDLAKNCPSQLSITENAHTLARYAAICQENGLVPIVEPEILMDGNHTVEQSAEVTEKVLAAVFKALNDHHILLEGALLKPNMVVNGTDCPIKATSEQIGKFTVRTLQRTVPPALTGVVFLSGGQTEIEATANLNAMNVLPNRPWALSFSYGRALQASVISTWKGESANVEAARKVYLHRAKCNSLAQLGKYTGEESTGSASESLYVKDYKY</sequence>
<gene>
    <name type="primary">fba</name>
    <name type="ORF">DDB_G0274375</name>
</gene>
<evidence type="ECO:0000250" key="1"/>
<evidence type="ECO:0000305" key="2"/>
<protein>
    <recommendedName>
        <fullName>Fructose-bisphosphate aldolase</fullName>
        <shortName>ALDO</shortName>
        <ecNumber>4.1.2.13</ecNumber>
    </recommendedName>
</protein>
<accession>Q86A67</accession>
<accession>Q556D6</accession>
<dbReference type="EC" id="4.1.2.13"/>
<dbReference type="EMBL" id="AAFI02000012">
    <property type="protein sequence ID" value="EAL70080.1"/>
    <property type="molecule type" value="Genomic_DNA"/>
</dbReference>
<dbReference type="RefSeq" id="XP_643874.1">
    <property type="nucleotide sequence ID" value="XM_638782.1"/>
</dbReference>
<dbReference type="SMR" id="Q86A67"/>
<dbReference type="FunCoup" id="Q86A67">
    <property type="interactions" value="254"/>
</dbReference>
<dbReference type="STRING" id="44689.Q86A67"/>
<dbReference type="PaxDb" id="44689-DDB0231387"/>
<dbReference type="EnsemblProtists" id="EAL70080">
    <property type="protein sequence ID" value="EAL70080"/>
    <property type="gene ID" value="DDB_G0274375"/>
</dbReference>
<dbReference type="GeneID" id="8619300"/>
<dbReference type="KEGG" id="ddi:DDB_G0274375"/>
<dbReference type="dictyBase" id="DDB_G0274375">
    <property type="gene designation" value="fba"/>
</dbReference>
<dbReference type="VEuPathDB" id="AmoebaDB:DDB_G0274375"/>
<dbReference type="eggNOG" id="KOG1557">
    <property type="taxonomic scope" value="Eukaryota"/>
</dbReference>
<dbReference type="HOGENOM" id="CLU_031243_0_0_1"/>
<dbReference type="InParanoid" id="Q86A67"/>
<dbReference type="OMA" id="WRAVITI"/>
<dbReference type="PhylomeDB" id="Q86A67"/>
<dbReference type="Reactome" id="R-DDI-114608">
    <property type="pathway name" value="Platelet degranulation"/>
</dbReference>
<dbReference type="Reactome" id="R-DDI-6798695">
    <property type="pathway name" value="Neutrophil degranulation"/>
</dbReference>
<dbReference type="Reactome" id="R-DDI-70171">
    <property type="pathway name" value="Glycolysis"/>
</dbReference>
<dbReference type="Reactome" id="R-DDI-70263">
    <property type="pathway name" value="Gluconeogenesis"/>
</dbReference>
<dbReference type="Reactome" id="R-DDI-70350">
    <property type="pathway name" value="Fructose catabolism"/>
</dbReference>
<dbReference type="UniPathway" id="UPA00109">
    <property type="reaction ID" value="UER00183"/>
</dbReference>
<dbReference type="PRO" id="PR:Q86A67"/>
<dbReference type="Proteomes" id="UP000002195">
    <property type="component" value="Chromosome 2"/>
</dbReference>
<dbReference type="GO" id="GO:0005829">
    <property type="term" value="C:cytosol"/>
    <property type="evidence" value="ECO:0000318"/>
    <property type="project" value="GO_Central"/>
</dbReference>
<dbReference type="GO" id="GO:0031012">
    <property type="term" value="C:extracellular matrix"/>
    <property type="evidence" value="ECO:0007005"/>
    <property type="project" value="dictyBase"/>
</dbReference>
<dbReference type="GO" id="GO:0045335">
    <property type="term" value="C:phagocytic vesicle"/>
    <property type="evidence" value="ECO:0007005"/>
    <property type="project" value="dictyBase"/>
</dbReference>
<dbReference type="GO" id="GO:0004332">
    <property type="term" value="F:fructose-bisphosphate aldolase activity"/>
    <property type="evidence" value="ECO:0000250"/>
    <property type="project" value="dictyBase"/>
</dbReference>
<dbReference type="GO" id="GO:0030388">
    <property type="term" value="P:fructose 1,6-bisphosphate metabolic process"/>
    <property type="evidence" value="ECO:0000318"/>
    <property type="project" value="GO_Central"/>
</dbReference>
<dbReference type="GO" id="GO:0006000">
    <property type="term" value="P:fructose metabolic process"/>
    <property type="evidence" value="ECO:0000250"/>
    <property type="project" value="dictyBase"/>
</dbReference>
<dbReference type="GO" id="GO:0006096">
    <property type="term" value="P:glycolytic process"/>
    <property type="evidence" value="ECO:0000250"/>
    <property type="project" value="dictyBase"/>
</dbReference>
<dbReference type="CDD" id="cd00948">
    <property type="entry name" value="FBP_aldolase_I_a"/>
    <property type="match status" value="1"/>
</dbReference>
<dbReference type="FunFam" id="3.20.20.70:FF:000140">
    <property type="entry name" value="Fructose-bisphosphate aldolase"/>
    <property type="match status" value="1"/>
</dbReference>
<dbReference type="Gene3D" id="3.20.20.70">
    <property type="entry name" value="Aldolase class I"/>
    <property type="match status" value="1"/>
</dbReference>
<dbReference type="InterPro" id="IPR029768">
    <property type="entry name" value="Aldolase_I_AS"/>
</dbReference>
<dbReference type="InterPro" id="IPR013785">
    <property type="entry name" value="Aldolase_TIM"/>
</dbReference>
<dbReference type="InterPro" id="IPR000741">
    <property type="entry name" value="FBA_I"/>
</dbReference>
<dbReference type="NCBIfam" id="NF033379">
    <property type="entry name" value="FrucBisAld_I"/>
    <property type="match status" value="1"/>
</dbReference>
<dbReference type="PANTHER" id="PTHR11627">
    <property type="entry name" value="FRUCTOSE-BISPHOSPHATE ALDOLASE"/>
    <property type="match status" value="1"/>
</dbReference>
<dbReference type="Pfam" id="PF00274">
    <property type="entry name" value="Glycolytic"/>
    <property type="match status" value="1"/>
</dbReference>
<dbReference type="SUPFAM" id="SSF51569">
    <property type="entry name" value="Aldolase"/>
    <property type="match status" value="1"/>
</dbReference>
<dbReference type="PROSITE" id="PS00158">
    <property type="entry name" value="ALDOLASE_CLASS_I"/>
    <property type="match status" value="1"/>
</dbReference>
<proteinExistence type="inferred from homology"/>
<keyword id="KW-0324">Glycolysis</keyword>
<keyword id="KW-0456">Lyase</keyword>
<keyword id="KW-1185">Reference proteome</keyword>
<keyword id="KW-0704">Schiff base</keyword>
<organism>
    <name type="scientific">Dictyostelium discoideum</name>
    <name type="common">Social amoeba</name>
    <dbReference type="NCBI Taxonomy" id="44689"/>
    <lineage>
        <taxon>Eukaryota</taxon>
        <taxon>Amoebozoa</taxon>
        <taxon>Evosea</taxon>
        <taxon>Eumycetozoa</taxon>
        <taxon>Dictyostelia</taxon>
        <taxon>Dictyosteliales</taxon>
        <taxon>Dictyosteliaceae</taxon>
        <taxon>Dictyostelium</taxon>
    </lineage>
</organism>
<name>ALF_DICDI</name>